<sequence>MSGEQTPMCSMDLPEVKVKTSMAGRCRVFWYEQYVQPCIVELVGSALFIFIGCLSVIENSPNTGLLQPALAHGLALGLIIATLGNISGGHFNPAVSLAVTVIGGLKTMLLIPYWISQLFGGLIGAALAKVVSPEERFWNASGAAFAIVQEQEQVAEALGIEIILTMLLVLAVCMGAVNEKTMGPLAPFSIGFSVIVDILAGGSISGACMNPARAFGPAVMAGYWDFHWIYWLGPLLAGLFVGLLIRLLIGDEKTRLILKSR</sequence>
<comment type="function">
    <text evidence="1 2 5 7 8 9 11 12">Channel that allows the facilitated permeation of water and uncharged molecules, such as hydrogen peroxide and the neutral form of ammonia (NH3), through cellular membranes such as plasma membrane, inner mitochondrial membrane and endoplasmic reticulum membrane of several tissues (PubMed:15647389, PubMed:15948717, PubMed:16624991, PubMed:21117174, PubMed:27256569, PubMed:9388476). The transport of ammonia neutral form induces a parallel transport of proton, at alkaline pH when the concentration of ammonia is high (By similarity). However, it is unclear whether the transport of proton takes place via the aquaporin or via an endogenous pathway (By similarity). Also, may transport ammonia analogs such as formamide and methylamine, a transport favourited at basic pH due to the increase of unprotonated (neutral) form, which is expected to favor diffusion (By similarity). In vitro, may be also permeable to urea but not to glycerol (PubMed:9388476). Does not transport urea or glycerol (By similarity). The water transport mechanism is mercury- and copper-sensitive and passive in response to osmotic driving forces (PubMed:9388476). At the canicular plasma membrane, mediates the osmotic transport of water toward the bile canaliculus and facilitates the cAMP-induced bile canalicular water secretion, a process involved in bile formation (By similarity). In addition, mediates the hydrogen peroxide release from hepatocyte mitochondria that modulates the SREBF2-mediated cholesterol synthesis and facilitates the mitochondrial ammonia uptake which is metabolized into urea, mainly under glucagon stimulation (By similarity). In B cells, transports the CYBB-generated hydrogen peroxide from the external leaflet of the plasma membrane to the cytosol to promote B cell activation and differentiation for signal amplification (PubMed:27256569). In the small intestine and colon system, mediates water transport through mitochondria and apical membrane of epithelial cells (By similarity). May play an important role in the adaptive response of proximal tubule cells to acidosis possibly facilitating mitochondrial ammonia transport (By similarity).</text>
</comment>
<comment type="catalytic activity">
    <reaction evidence="5 7 8 9 12">
        <text>H2O(in) = H2O(out)</text>
        <dbReference type="Rhea" id="RHEA:29667"/>
        <dbReference type="ChEBI" id="CHEBI:15377"/>
    </reaction>
</comment>
<comment type="catalytic activity">
    <reaction evidence="12">
        <text>urea(in) = urea(out)</text>
        <dbReference type="Rhea" id="RHEA:32799"/>
        <dbReference type="ChEBI" id="CHEBI:16199"/>
    </reaction>
</comment>
<comment type="catalytic activity">
    <reaction evidence="8">
        <text>NH4(+)(in) = NH4(+)(out)</text>
        <dbReference type="Rhea" id="RHEA:28747"/>
        <dbReference type="ChEBI" id="CHEBI:28938"/>
    </reaction>
</comment>
<comment type="catalytic activity">
    <reaction evidence="11">
        <text>H2O2(out) = H2O2(in)</text>
        <dbReference type="Rhea" id="RHEA:74375"/>
        <dbReference type="ChEBI" id="CHEBI:16240"/>
    </reaction>
</comment>
<comment type="catalytic activity">
    <reaction evidence="1">
        <text>formamide(out) = formamide(in)</text>
        <dbReference type="Rhea" id="RHEA:74387"/>
        <dbReference type="ChEBI" id="CHEBI:16397"/>
    </reaction>
</comment>
<comment type="catalytic activity">
    <reaction evidence="1">
        <text>methylamine(out) = methylamine(in)</text>
        <dbReference type="Rhea" id="RHEA:74391"/>
        <dbReference type="ChEBI" id="CHEBI:59338"/>
    </reaction>
</comment>
<comment type="activity regulation">
    <text evidence="1">Reversibly gated by a two-step sulfenylation-persulfidation process in cells undergoing diverse stresses.</text>
</comment>
<comment type="subcellular location">
    <subcellularLocation>
        <location evidence="4 5 6">Cell membrane</location>
        <topology evidence="3">Multi-pass membrane protein</topology>
    </subcellularLocation>
    <subcellularLocation>
        <location evidence="4 6 15 16">Mitochondrion inner membrane</location>
        <topology evidence="3">Multi-pass membrane protein</topology>
    </subcellularLocation>
    <subcellularLocation>
        <location evidence="6">Apical cell membrane</location>
        <topology evidence="3">Multi-pass membrane protein</topology>
    </subcellularLocation>
    <subcellularLocation>
        <location evidence="2">Basolateral cell membrane</location>
        <topology evidence="3">Multi-pass membrane protein</topology>
    </subcellularLocation>
    <subcellularLocation>
        <location evidence="4">Smooth endoplasmic reticulum membrane</location>
        <topology evidence="3">Multi-pass membrane protein</topology>
    </subcellularLocation>
    <text evidence="2 4 5 6">Localized at the hepatocyte canalicular plasma membrane (PubMed:14512882). Localized at the apical membrane of the gall-bladder epithelial cells lining both the neck and corpus regions (PubMed:15859952). Localized on the apical membranes of pancreatic acinar cells and mucosal epithelium of the colon and jejunum. Trafficking from intracellular vesicles to the hepatocyte canalicular plasma membrane is induced by glucagon or the second messenger 3',5'-cyclic AMP and the translocation is protein kinase A and microtubule-dependent. Localized at the brush border membranes of epithelial cells from jejunum (By similarity). Localized at the luminal membranes of crypts in ascending colon (PubMed:15647389).</text>
</comment>
<comment type="tissue specificity">
    <text evidence="5 6 12">Expressed in placenta (PubMed:9388476). Highly expressed in the epithelial layer of gall-bladders (PubMed:15859952). Expressed in heart, kidney, submandibular gland, liver, small intestine, colon, testes, and epididymis (PubMed:15647389, PubMed:9388476). In testes, expressed in spermatogenic cells (PubMed:15647389).</text>
</comment>
<comment type="developmental stage">
    <text evidence="4">Strongly expressed between fetal day 17 and birth as well as at weaning and thereafter.</text>
</comment>
<comment type="induction">
    <text evidence="4">Down-regulated by fasting.</text>
</comment>
<comment type="domain">
    <text>Aquaporins contain two tandem repeats each containing three membrane-spanning domains and a pore-forming loop with the signature motif Asn-Pro-Ala (NPA).</text>
</comment>
<comment type="PTM">
    <text evidence="1">Sulfenylation at Cys-53(C53-SOH) when hydrogen peroxide flows through the AQP8 channel, making it susceptible to hydrogen sulfide produced by CBS.</text>
</comment>
<comment type="PTM">
    <text evidence="1">Persulfidation at Cys-53 is required to gate AQP8 channel; under stress condition, hydrogen peroxide accumulates in the cell leading to CBS activation that produces hydrogen sulfide inducing persulfidation of oxidized Cys-53 (C53-SOH).</text>
</comment>
<comment type="PTM">
    <text evidence="2">N-glycosylated.</text>
</comment>
<comment type="disruption phenotype">
    <text evidence="5 9 10">Homozygous mice for AQP8 have normal appearance, survival, and growth (PubMed:15647389). Homozygous mice female for AQP8 exhibit increased fertility and numbers of oocytes in ovulation (PubMed:21117174). Homozygous male mice show an unaffected fertility (PubMed:21117174). Homozygous pregnant mice have a significantly higher number of embryos and fetal/neonatal weight is also significantly greater (PubMed:21602842). Exhibit a greater amount of amniotic fluid and placental weight is significantly larger (PubMed:21602842).</text>
</comment>
<comment type="similarity">
    <text evidence="14">Belongs to the MIP/aquaporin (TC 1.A.8) family.</text>
</comment>
<evidence type="ECO:0000250" key="1">
    <source>
        <dbReference type="UniProtKB" id="O94778"/>
    </source>
</evidence>
<evidence type="ECO:0000250" key="2">
    <source>
        <dbReference type="UniProtKB" id="P56405"/>
    </source>
</evidence>
<evidence type="ECO:0000255" key="3"/>
<evidence type="ECO:0000269" key="4">
    <source>
    </source>
</evidence>
<evidence type="ECO:0000269" key="5">
    <source>
    </source>
</evidence>
<evidence type="ECO:0000269" key="6">
    <source>
    </source>
</evidence>
<evidence type="ECO:0000269" key="7">
    <source>
    </source>
</evidence>
<evidence type="ECO:0000269" key="8">
    <source>
    </source>
</evidence>
<evidence type="ECO:0000269" key="9">
    <source>
    </source>
</evidence>
<evidence type="ECO:0000269" key="10">
    <source>
    </source>
</evidence>
<evidence type="ECO:0000269" key="11">
    <source>
    </source>
</evidence>
<evidence type="ECO:0000269" key="12">
    <source>
    </source>
</evidence>
<evidence type="ECO:0000303" key="13">
    <source>
    </source>
</evidence>
<evidence type="ECO:0000305" key="14"/>
<evidence type="ECO:0000305" key="15">
    <source>
    </source>
</evidence>
<evidence type="ECO:0000305" key="16">
    <source>
    </source>
</evidence>
<evidence type="ECO:0000312" key="17">
    <source>
        <dbReference type="MGI" id="MGI:1195271"/>
    </source>
</evidence>
<reference key="1">
    <citation type="journal article" date="1997" name="Biochem. Biophys. Res. Commun.">
        <title>Cloning of a novel water and urea-permeable aquaporin from mouse expressed strongly in colon, placenta, liver, and heart.</title>
        <authorList>
            <person name="Ma T."/>
            <person name="Yang B."/>
            <person name="Verkman A.S."/>
        </authorList>
    </citation>
    <scope>NUCLEOTIDE SEQUENCE [MRNA]</scope>
    <scope>FUNCTION</scope>
    <scope>TRANSPORTER ACTIVITY</scope>
    <scope>TISSUE SPECIFICITY</scope>
    <source>
        <strain>C57BL/6J</strain>
    </source>
</reference>
<reference key="2">
    <citation type="journal article" date="1999" name="Cytogenet. Cell Genet.">
        <title>Cloning, structural organization and chromosomal localization of the mouse aquaporin-8 water channel gene (Aqp8).</title>
        <authorList>
            <person name="Calamita G."/>
            <person name="Spalluto C."/>
            <person name="Mazzone A."/>
            <person name="Rocchi M."/>
            <person name="Svelto M."/>
        </authorList>
    </citation>
    <scope>NUCLEOTIDE SEQUENCE [GENOMIC DNA]</scope>
    <source>
        <strain>129</strain>
    </source>
</reference>
<reference key="3">
    <citation type="journal article" date="2004" name="Genome Res.">
        <title>The status, quality, and expansion of the NIH full-length cDNA project: the Mammalian Gene Collection (MGC).</title>
        <authorList>
            <consortium name="The MGC Project Team"/>
        </authorList>
    </citation>
    <scope>NUCLEOTIDE SEQUENCE [LARGE SCALE MRNA]</scope>
    <source>
        <tissue>Colon</tissue>
    </source>
</reference>
<reference key="4">
    <citation type="journal article" date="2003" name="Hepatology">
        <title>Ontogeny, distribution, and possible functional implications of an unusual aquaporin, AQP8, in mouse liver.</title>
        <authorList>
            <person name="Ferri D."/>
            <person name="Mazzone A."/>
            <person name="Liquori G.E."/>
            <person name="Cassano G."/>
            <person name="Svelto M."/>
            <person name="Calamita G."/>
        </authorList>
    </citation>
    <scope>SUBCELLULAR LOCATION</scope>
    <scope>DEVELOPMENTAL STAGE</scope>
    <scope>INDUCTION</scope>
</reference>
<reference key="5">
    <citation type="journal article" date="2005" name="Am. J. Physiol.">
        <title>Phenotype analysis of aquaporin-8 null mice.</title>
        <authorList>
            <person name="Yang B."/>
            <person name="Song Y."/>
            <person name="Zhao D."/>
            <person name="Verkman A.S."/>
        </authorList>
    </citation>
    <scope>FUNCTION</scope>
    <scope>TRANSPORTER ACTIVITY</scope>
    <scope>SUBCELLULAR LOCATION</scope>
    <scope>TISSUE SPECIFICITY</scope>
    <scope>DISRUPTION PHENOTYPE</scope>
</reference>
<reference key="6">
    <citation type="journal article" date="2005" name="Biol. Cell">
        <title>Expression and subcellular localization of the AQP8 and AQP1 water channels in the mouse gall-bladder epithelium.</title>
        <authorList>
            <person name="Calamita G."/>
            <person name="Ferri D."/>
            <person name="Bazzini C."/>
            <person name="Mazzone A."/>
            <person name="Botta G."/>
            <person name="Liquori G.E."/>
            <person name="Paulmichl M."/>
            <person name="Portincasa P."/>
            <person name="Meyer G."/>
            <person name="Svelto M."/>
        </authorList>
    </citation>
    <scope>SUBCELLULAR LOCATION</scope>
    <scope>TISSUE SPECIFICITY</scope>
</reference>
<reference key="7">
    <citation type="journal article" date="2006" name="Am. J. Physiol.">
        <title>Evidence from knockout mice against physiologically significant aquaporin 8-facilitated ammonia transport.</title>
        <authorList>
            <person name="Yang B."/>
            <person name="Zhao D."/>
            <person name="Solenov E."/>
            <person name="Verkman A.S."/>
        </authorList>
    </citation>
    <scope>FUNCTION</scope>
    <scope>CATALYTIC ACTIVITY</scope>
</reference>
<reference key="8">
    <citation type="journal article" date="2006" name="Biol. Cell">
        <title>Purification and functional characterization of aquaporin-8.</title>
        <authorList>
            <person name="Liu K."/>
            <person name="Nagase H."/>
            <person name="Huang C.G."/>
            <person name="Calamita G."/>
            <person name="Agre P."/>
        </authorList>
    </citation>
    <scope>FUNCTION</scope>
    <scope>TRANSPORTER ACTIVITY</scope>
</reference>
<reference key="9">
    <citation type="journal article" date="2010" name="IUBMB Life">
        <title>Increased female fertility in aquaporin 8-deficient mice.</title>
        <authorList>
            <person name="Su W."/>
            <person name="Qiao Y."/>
            <person name="Yi F."/>
            <person name="Guan X."/>
            <person name="Zhang D."/>
            <person name="Zhang S."/>
            <person name="Hao F."/>
            <person name="Xiao Y."/>
            <person name="Zhang H."/>
            <person name="Guo L."/>
            <person name="Yang L."/>
            <person name="Feng X."/>
            <person name="Ma T."/>
        </authorList>
    </citation>
    <scope>FUNCTION</scope>
    <scope>TRANSPORTER ACTIVITY</scope>
    <scope>DISRUPTION PHENOTYPE</scope>
</reference>
<reference key="10">
    <citation type="journal article" date="2011" name="Acta Pharmacol. Sin.">
        <title>Pregnant phenotype in aquaporin 8-deficient mice.</title>
        <authorList>
            <person name="Sha X.Y."/>
            <person name="Xiong Z.F."/>
            <person name="Liu H.S."/>
            <person name="Zheng Z."/>
            <person name="Ma T.H."/>
        </authorList>
    </citation>
    <scope>DISRUPTION PHENOTYPE</scope>
</reference>
<reference key="11">
    <citation type="journal article" date="2016" name="J. Leukoc. Biol.">
        <title>AQP8 transports NOX2-generated H2O2 across the plasma membrane to promote signaling in B cells.</title>
        <authorList>
            <person name="Bertolotti M."/>
            <person name="Farinelli G."/>
            <person name="Galli M."/>
            <person name="Aiuti A."/>
            <person name="Sitia R."/>
        </authorList>
    </citation>
    <scope>FUNCTION</scope>
    <scope>TRANSPORTER ACTIVITY</scope>
</reference>
<proteinExistence type="evidence at protein level"/>
<gene>
    <name evidence="13 17" type="primary">Aqp8</name>
</gene>
<dbReference type="EMBL" id="AF018952">
    <property type="protein sequence ID" value="AAB68847.1"/>
    <property type="molecule type" value="mRNA"/>
</dbReference>
<dbReference type="EMBL" id="AF107543">
    <property type="protein sequence ID" value="AAD55972.1"/>
    <property type="molecule type" value="Genomic_DNA"/>
</dbReference>
<dbReference type="EMBL" id="AF107538">
    <property type="protein sequence ID" value="AAD55972.1"/>
    <property type="status" value="JOINED"/>
    <property type="molecule type" value="Genomic_DNA"/>
</dbReference>
<dbReference type="EMBL" id="AF107539">
    <property type="protein sequence ID" value="AAD55972.1"/>
    <property type="status" value="JOINED"/>
    <property type="molecule type" value="Genomic_DNA"/>
</dbReference>
<dbReference type="EMBL" id="AF107540">
    <property type="protein sequence ID" value="AAD55972.1"/>
    <property type="status" value="JOINED"/>
    <property type="molecule type" value="Genomic_DNA"/>
</dbReference>
<dbReference type="EMBL" id="AF107541">
    <property type="protein sequence ID" value="AAD55972.1"/>
    <property type="status" value="JOINED"/>
    <property type="molecule type" value="Genomic_DNA"/>
</dbReference>
<dbReference type="EMBL" id="AF107542">
    <property type="protein sequence ID" value="AAD55972.1"/>
    <property type="status" value="JOINED"/>
    <property type="molecule type" value="Genomic_DNA"/>
</dbReference>
<dbReference type="EMBL" id="BC010982">
    <property type="protein sequence ID" value="AAH10982.1"/>
    <property type="molecule type" value="mRNA"/>
</dbReference>
<dbReference type="CCDS" id="CCDS72038.1"/>
<dbReference type="PIR" id="JC5806">
    <property type="entry name" value="JC5806"/>
</dbReference>
<dbReference type="RefSeq" id="NP_001102515.1">
    <property type="nucleotide sequence ID" value="NM_001109045.1"/>
</dbReference>
<dbReference type="RefSeq" id="NP_031500.1">
    <property type="nucleotide sequence ID" value="NM_007474.2"/>
</dbReference>
<dbReference type="SMR" id="P56404"/>
<dbReference type="FunCoup" id="P56404">
    <property type="interactions" value="17"/>
</dbReference>
<dbReference type="STRING" id="10090.ENSMUSP00000095664"/>
<dbReference type="GlyCosmos" id="P56404">
    <property type="glycosylation" value="1 site, No reported glycans"/>
</dbReference>
<dbReference type="GlyGen" id="P56404">
    <property type="glycosylation" value="1 site"/>
</dbReference>
<dbReference type="PhosphoSitePlus" id="P56404"/>
<dbReference type="SwissPalm" id="P56404"/>
<dbReference type="PaxDb" id="10090-ENSMUSP00000033023"/>
<dbReference type="Antibodypedia" id="26204">
    <property type="antibodies" value="196 antibodies from 31 providers"/>
</dbReference>
<dbReference type="DNASU" id="11833"/>
<dbReference type="Ensembl" id="ENSMUST00000098056.6">
    <property type="protein sequence ID" value="ENSMUSP00000095664.6"/>
    <property type="gene ID" value="ENSMUSG00000030762.12"/>
</dbReference>
<dbReference type="GeneID" id="11833"/>
<dbReference type="KEGG" id="mmu:11833"/>
<dbReference type="UCSC" id="uc012ftk.2">
    <property type="organism name" value="mouse"/>
</dbReference>
<dbReference type="AGR" id="MGI:1195271"/>
<dbReference type="CTD" id="343"/>
<dbReference type="MGI" id="MGI:1195271">
    <property type="gene designation" value="Aqp8"/>
</dbReference>
<dbReference type="VEuPathDB" id="HostDB:ENSMUSG00000030762"/>
<dbReference type="eggNOG" id="KOG0223">
    <property type="taxonomic scope" value="Eukaryota"/>
</dbReference>
<dbReference type="GeneTree" id="ENSGT00940000159304"/>
<dbReference type="HOGENOM" id="CLU_020019_3_5_1"/>
<dbReference type="InParanoid" id="P56404"/>
<dbReference type="OMA" id="PAMVANH"/>
<dbReference type="OrthoDB" id="3222at2759"/>
<dbReference type="PhylomeDB" id="P56404"/>
<dbReference type="TreeFam" id="TF312940"/>
<dbReference type="Reactome" id="R-MMU-432047">
    <property type="pathway name" value="Passive transport by Aquaporins"/>
</dbReference>
<dbReference type="BioGRID-ORCS" id="11833">
    <property type="hits" value="0 hits in 72 CRISPR screens"/>
</dbReference>
<dbReference type="PRO" id="PR:P56404"/>
<dbReference type="Proteomes" id="UP000000589">
    <property type="component" value="Chromosome 7"/>
</dbReference>
<dbReference type="RNAct" id="P56404">
    <property type="molecule type" value="protein"/>
</dbReference>
<dbReference type="Bgee" id="ENSMUSG00000030762">
    <property type="expression patterns" value="Expressed in left colon and 52 other cell types or tissues"/>
</dbReference>
<dbReference type="ExpressionAtlas" id="P56404">
    <property type="expression patterns" value="baseline and differential"/>
</dbReference>
<dbReference type="GO" id="GO:0016324">
    <property type="term" value="C:apical plasma membrane"/>
    <property type="evidence" value="ECO:0000314"/>
    <property type="project" value="UniProtKB"/>
</dbReference>
<dbReference type="GO" id="GO:0016323">
    <property type="term" value="C:basolateral plasma membrane"/>
    <property type="evidence" value="ECO:0000250"/>
    <property type="project" value="UniProtKB"/>
</dbReference>
<dbReference type="GO" id="GO:0031526">
    <property type="term" value="C:brush border membrane"/>
    <property type="evidence" value="ECO:0000250"/>
    <property type="project" value="UniProtKB"/>
</dbReference>
<dbReference type="GO" id="GO:0046691">
    <property type="term" value="C:intracellular canaliculus"/>
    <property type="evidence" value="ECO:0000314"/>
    <property type="project" value="UniProtKB"/>
</dbReference>
<dbReference type="GO" id="GO:0097708">
    <property type="term" value="C:intracellular vesicle"/>
    <property type="evidence" value="ECO:0000314"/>
    <property type="project" value="UniProtKB"/>
</dbReference>
<dbReference type="GO" id="GO:0005743">
    <property type="term" value="C:mitochondrial inner membrane"/>
    <property type="evidence" value="ECO:0000250"/>
    <property type="project" value="UniProtKB"/>
</dbReference>
<dbReference type="GO" id="GO:0031966">
    <property type="term" value="C:mitochondrial membrane"/>
    <property type="evidence" value="ECO:0000250"/>
    <property type="project" value="UniProtKB"/>
</dbReference>
<dbReference type="GO" id="GO:0005739">
    <property type="term" value="C:mitochondrion"/>
    <property type="evidence" value="ECO:0000314"/>
    <property type="project" value="UniProtKB"/>
</dbReference>
<dbReference type="GO" id="GO:0005886">
    <property type="term" value="C:plasma membrane"/>
    <property type="evidence" value="ECO:0000314"/>
    <property type="project" value="UniProtKB"/>
</dbReference>
<dbReference type="GO" id="GO:0005790">
    <property type="term" value="C:smooth endoplasmic reticulum"/>
    <property type="evidence" value="ECO:0000314"/>
    <property type="project" value="UniProtKB"/>
</dbReference>
<dbReference type="GO" id="GO:0030868">
    <property type="term" value="C:smooth endoplasmic reticulum membrane"/>
    <property type="evidence" value="ECO:0007669"/>
    <property type="project" value="UniProtKB-SubCell"/>
</dbReference>
<dbReference type="GO" id="GO:0008519">
    <property type="term" value="F:ammonium channel activity"/>
    <property type="evidence" value="ECO:0000315"/>
    <property type="project" value="UniProtKB"/>
</dbReference>
<dbReference type="GO" id="GO:0015264">
    <property type="term" value="F:methylammonium channel activity"/>
    <property type="evidence" value="ECO:0000250"/>
    <property type="project" value="UniProtKB"/>
</dbReference>
<dbReference type="GO" id="GO:0015265">
    <property type="term" value="F:urea channel activity"/>
    <property type="evidence" value="ECO:0000314"/>
    <property type="project" value="UniProtKB"/>
</dbReference>
<dbReference type="GO" id="GO:0015250">
    <property type="term" value="F:water channel activity"/>
    <property type="evidence" value="ECO:0000314"/>
    <property type="project" value="UniProtKB"/>
</dbReference>
<dbReference type="GO" id="GO:0140157">
    <property type="term" value="P:ammonium import across plasma membrane"/>
    <property type="evidence" value="ECO:0000314"/>
    <property type="project" value="UniProtKB"/>
</dbReference>
<dbReference type="GO" id="GO:0030183">
    <property type="term" value="P:B cell differentiation"/>
    <property type="evidence" value="ECO:0000315"/>
    <property type="project" value="UniProtKB"/>
</dbReference>
<dbReference type="GO" id="GO:1990748">
    <property type="term" value="P:cellular detoxification"/>
    <property type="evidence" value="ECO:0000250"/>
    <property type="project" value="UniProtKB"/>
</dbReference>
<dbReference type="GO" id="GO:0071320">
    <property type="term" value="P:cellular response to cAMP"/>
    <property type="evidence" value="ECO:0007669"/>
    <property type="project" value="Ensembl"/>
</dbReference>
<dbReference type="GO" id="GO:0080170">
    <property type="term" value="P:hydrogen peroxide transmembrane transport"/>
    <property type="evidence" value="ECO:0000315"/>
    <property type="project" value="UniProtKB"/>
</dbReference>
<dbReference type="GO" id="GO:0072489">
    <property type="term" value="P:methylammonium transmembrane transport"/>
    <property type="evidence" value="ECO:0000250"/>
    <property type="project" value="UniProtKB"/>
</dbReference>
<dbReference type="GO" id="GO:0015843">
    <property type="term" value="P:methylammonium transport"/>
    <property type="evidence" value="ECO:0000250"/>
    <property type="project" value="UniProtKB"/>
</dbReference>
<dbReference type="GO" id="GO:0045540">
    <property type="term" value="P:regulation of cholesterol biosynthetic process"/>
    <property type="evidence" value="ECO:0000250"/>
    <property type="project" value="UniProtKB"/>
</dbReference>
<dbReference type="GO" id="GO:0035377">
    <property type="term" value="P:transepithelial water transport"/>
    <property type="evidence" value="ECO:0000250"/>
    <property type="project" value="UniProtKB"/>
</dbReference>
<dbReference type="GO" id="GO:0015840">
    <property type="term" value="P:urea transport"/>
    <property type="evidence" value="ECO:0000314"/>
    <property type="project" value="UniProtKB"/>
</dbReference>
<dbReference type="GO" id="GO:0006833">
    <property type="term" value="P:water transport"/>
    <property type="evidence" value="ECO:0000314"/>
    <property type="project" value="UniProtKB"/>
</dbReference>
<dbReference type="FunFam" id="1.20.1080.10:FF:000015">
    <property type="entry name" value="Aquaporin 8"/>
    <property type="match status" value="1"/>
</dbReference>
<dbReference type="Gene3D" id="1.20.1080.10">
    <property type="entry name" value="Glycerol uptake facilitator protein"/>
    <property type="match status" value="1"/>
</dbReference>
<dbReference type="InterPro" id="IPR023271">
    <property type="entry name" value="Aquaporin-like"/>
</dbReference>
<dbReference type="InterPro" id="IPR023277">
    <property type="entry name" value="Aquaporin_8"/>
</dbReference>
<dbReference type="InterPro" id="IPR034294">
    <property type="entry name" value="Aquaporin_transptr"/>
</dbReference>
<dbReference type="InterPro" id="IPR000425">
    <property type="entry name" value="MIP"/>
</dbReference>
<dbReference type="InterPro" id="IPR022357">
    <property type="entry name" value="MIP_CS"/>
</dbReference>
<dbReference type="PANTHER" id="PTHR45665">
    <property type="entry name" value="AQUAPORIN-8"/>
    <property type="match status" value="1"/>
</dbReference>
<dbReference type="PANTHER" id="PTHR45665:SF9">
    <property type="entry name" value="AQUAPORIN-8"/>
    <property type="match status" value="1"/>
</dbReference>
<dbReference type="Pfam" id="PF00230">
    <property type="entry name" value="MIP"/>
    <property type="match status" value="1"/>
</dbReference>
<dbReference type="PRINTS" id="PR02020">
    <property type="entry name" value="AQUAPORIN8"/>
</dbReference>
<dbReference type="PRINTS" id="PR00783">
    <property type="entry name" value="MINTRINSICP"/>
</dbReference>
<dbReference type="SUPFAM" id="SSF81338">
    <property type="entry name" value="Aquaporin-like"/>
    <property type="match status" value="1"/>
</dbReference>
<dbReference type="PROSITE" id="PS00221">
    <property type="entry name" value="MIP"/>
    <property type="match status" value="1"/>
</dbReference>
<name>AQP8_MOUSE</name>
<organism>
    <name type="scientific">Mus musculus</name>
    <name type="common">Mouse</name>
    <dbReference type="NCBI Taxonomy" id="10090"/>
    <lineage>
        <taxon>Eukaryota</taxon>
        <taxon>Metazoa</taxon>
        <taxon>Chordata</taxon>
        <taxon>Craniata</taxon>
        <taxon>Vertebrata</taxon>
        <taxon>Euteleostomi</taxon>
        <taxon>Mammalia</taxon>
        <taxon>Eutheria</taxon>
        <taxon>Euarchontoglires</taxon>
        <taxon>Glires</taxon>
        <taxon>Rodentia</taxon>
        <taxon>Myomorpha</taxon>
        <taxon>Muroidea</taxon>
        <taxon>Muridae</taxon>
        <taxon>Murinae</taxon>
        <taxon>Mus</taxon>
        <taxon>Mus</taxon>
    </lineage>
</organism>
<feature type="chain" id="PRO_0000063962" description="Aquaporin-8">
    <location>
        <begin position="1"/>
        <end position="261"/>
    </location>
</feature>
<feature type="topological domain" description="Cytoplasmic" evidence="3">
    <location>
        <begin position="1"/>
        <end position="36"/>
    </location>
</feature>
<feature type="transmembrane region" description="Helical" evidence="3">
    <location>
        <begin position="37"/>
        <end position="57"/>
    </location>
</feature>
<feature type="topological domain" description="Extracellular" evidence="3">
    <location>
        <begin position="58"/>
        <end position="84"/>
    </location>
</feature>
<feature type="transmembrane region" description="Helical" evidence="3">
    <location>
        <begin position="85"/>
        <end position="105"/>
    </location>
</feature>
<feature type="topological domain" description="Cytoplasmic" evidence="3">
    <location>
        <begin position="106"/>
        <end position="107"/>
    </location>
</feature>
<feature type="transmembrane region" description="Helical" evidence="3">
    <location>
        <begin position="108"/>
        <end position="128"/>
    </location>
</feature>
<feature type="topological domain" description="Extracellular" evidence="3">
    <location>
        <begin position="129"/>
        <end position="156"/>
    </location>
</feature>
<feature type="transmembrane region" description="Helical" evidence="3">
    <location>
        <begin position="157"/>
        <end position="177"/>
    </location>
</feature>
<feature type="topological domain" description="Cytoplasmic" evidence="3">
    <location>
        <begin position="178"/>
        <end position="183"/>
    </location>
</feature>
<feature type="transmembrane region" description="Helical" evidence="3">
    <location>
        <begin position="184"/>
        <end position="204"/>
    </location>
</feature>
<feature type="topological domain" description="Extracellular" evidence="3">
    <location>
        <begin position="205"/>
        <end position="228"/>
    </location>
</feature>
<feature type="transmembrane region" description="Helical" evidence="3">
    <location>
        <begin position="229"/>
        <end position="249"/>
    </location>
</feature>
<feature type="topological domain" description="Cytoplasmic" evidence="3">
    <location>
        <begin position="250"/>
        <end position="261"/>
    </location>
</feature>
<feature type="short sequence motif" description="NPA 1">
    <location>
        <begin position="92"/>
        <end position="94"/>
    </location>
</feature>
<feature type="short sequence motif" description="NPA 2">
    <location>
        <begin position="210"/>
        <end position="212"/>
    </location>
</feature>
<feature type="modified residue" description="Cysteine persulfide" evidence="1">
    <location>
        <position position="53"/>
    </location>
</feature>
<feature type="modified residue" description="Cysteine sulfenic acid (-SOH)" evidence="1">
    <location>
        <position position="53"/>
    </location>
</feature>
<feature type="glycosylation site" description="N-linked (GlcNAc...) asparagine" evidence="3">
    <location>
        <position position="139"/>
    </location>
</feature>
<feature type="sequence conflict" description="In Ref. 3; AAH10982." evidence="14" ref="3">
    <location>
        <position position="5"/>
    </location>
</feature>
<protein>
    <recommendedName>
        <fullName evidence="13">Aquaporin-8</fullName>
        <shortName>AQP-8</shortName>
    </recommendedName>
</protein>
<keyword id="KW-1003">Cell membrane</keyword>
<keyword id="KW-0256">Endoplasmic reticulum</keyword>
<keyword id="KW-0325">Glycoprotein</keyword>
<keyword id="KW-0472">Membrane</keyword>
<keyword id="KW-0496">Mitochondrion</keyword>
<keyword id="KW-0999">Mitochondrion inner membrane</keyword>
<keyword id="KW-0558">Oxidation</keyword>
<keyword id="KW-1185">Reference proteome</keyword>
<keyword id="KW-0677">Repeat</keyword>
<keyword id="KW-0812">Transmembrane</keyword>
<keyword id="KW-1133">Transmembrane helix</keyword>
<keyword id="KW-0813">Transport</keyword>
<accession>P56404</accession>
<accession>Q91XC2</accession>